<gene>
    <name evidence="1" type="primary">ihfB</name>
    <name evidence="1" type="synonym">himD</name>
    <name type="ordered locus">HS_0975</name>
</gene>
<reference key="1">
    <citation type="journal article" date="2007" name="J. Bacteriol.">
        <title>Complete genome sequence of Haemophilus somnus (Histophilus somni) strain 129Pt and comparison to Haemophilus ducreyi 35000HP and Haemophilus influenzae Rd.</title>
        <authorList>
            <person name="Challacombe J.F."/>
            <person name="Duncan A.J."/>
            <person name="Brettin T.S."/>
            <person name="Bruce D."/>
            <person name="Chertkov O."/>
            <person name="Detter J.C."/>
            <person name="Han C.S."/>
            <person name="Misra M."/>
            <person name="Richardson P."/>
            <person name="Tapia R."/>
            <person name="Thayer N."/>
            <person name="Xie G."/>
            <person name="Inzana T.J."/>
        </authorList>
    </citation>
    <scope>NUCLEOTIDE SEQUENCE [LARGE SCALE GENOMIC DNA]</scope>
    <source>
        <strain>129Pt</strain>
    </source>
</reference>
<organism>
    <name type="scientific">Histophilus somni (strain 129Pt)</name>
    <name type="common">Haemophilus somnus</name>
    <dbReference type="NCBI Taxonomy" id="205914"/>
    <lineage>
        <taxon>Bacteria</taxon>
        <taxon>Pseudomonadati</taxon>
        <taxon>Pseudomonadota</taxon>
        <taxon>Gammaproteobacteria</taxon>
        <taxon>Pasteurellales</taxon>
        <taxon>Pasteurellaceae</taxon>
        <taxon>Histophilus</taxon>
    </lineage>
</organism>
<comment type="function">
    <text evidence="1">This protein is one of the two subunits of integration host factor, a specific DNA-binding protein that functions in genetic recombination as well as in transcriptional and translational control.</text>
</comment>
<comment type="subunit">
    <text evidence="1">Heterodimer of an alpha and a beta chain.</text>
</comment>
<comment type="similarity">
    <text evidence="1">Belongs to the bacterial histone-like protein family.</text>
</comment>
<evidence type="ECO:0000255" key="1">
    <source>
        <dbReference type="HAMAP-Rule" id="MF_00381"/>
    </source>
</evidence>
<name>IHFB_HISS1</name>
<accession>Q0I390</accession>
<sequence length="94" mass="10641">MTKSELIENLASTNPNVPLKDIENAVKDILEQLSQALENGERIEIRGFGSFSLHFRQSRIGRNPKTGEKVDLSAKYVPHFKAGKELKERVNIYS</sequence>
<protein>
    <recommendedName>
        <fullName evidence="1">Integration host factor subunit beta</fullName>
        <shortName evidence="1">IHF-beta</shortName>
    </recommendedName>
</protein>
<proteinExistence type="inferred from homology"/>
<dbReference type="EMBL" id="CP000436">
    <property type="protein sequence ID" value="ABI25250.1"/>
    <property type="molecule type" value="Genomic_DNA"/>
</dbReference>
<dbReference type="SMR" id="Q0I390"/>
<dbReference type="KEGG" id="hso:HS_0975"/>
<dbReference type="eggNOG" id="COG0776">
    <property type="taxonomic scope" value="Bacteria"/>
</dbReference>
<dbReference type="HOGENOM" id="CLU_105066_2_0_6"/>
<dbReference type="GO" id="GO:0005694">
    <property type="term" value="C:chromosome"/>
    <property type="evidence" value="ECO:0007669"/>
    <property type="project" value="InterPro"/>
</dbReference>
<dbReference type="GO" id="GO:0005829">
    <property type="term" value="C:cytosol"/>
    <property type="evidence" value="ECO:0007669"/>
    <property type="project" value="TreeGrafter"/>
</dbReference>
<dbReference type="GO" id="GO:0003677">
    <property type="term" value="F:DNA binding"/>
    <property type="evidence" value="ECO:0007669"/>
    <property type="project" value="UniProtKB-UniRule"/>
</dbReference>
<dbReference type="GO" id="GO:0030527">
    <property type="term" value="F:structural constituent of chromatin"/>
    <property type="evidence" value="ECO:0007669"/>
    <property type="project" value="InterPro"/>
</dbReference>
<dbReference type="GO" id="GO:0006310">
    <property type="term" value="P:DNA recombination"/>
    <property type="evidence" value="ECO:0007669"/>
    <property type="project" value="UniProtKB-UniRule"/>
</dbReference>
<dbReference type="GO" id="GO:0006355">
    <property type="term" value="P:regulation of DNA-templated transcription"/>
    <property type="evidence" value="ECO:0007669"/>
    <property type="project" value="UniProtKB-UniRule"/>
</dbReference>
<dbReference type="GO" id="GO:0006417">
    <property type="term" value="P:regulation of translation"/>
    <property type="evidence" value="ECO:0007669"/>
    <property type="project" value="UniProtKB-UniRule"/>
</dbReference>
<dbReference type="CDD" id="cd13836">
    <property type="entry name" value="IHF_B"/>
    <property type="match status" value="1"/>
</dbReference>
<dbReference type="FunFam" id="4.10.520.10:FF:000003">
    <property type="entry name" value="Integration host factor subunit beta"/>
    <property type="match status" value="1"/>
</dbReference>
<dbReference type="Gene3D" id="4.10.520.10">
    <property type="entry name" value="IHF-like DNA-binding proteins"/>
    <property type="match status" value="1"/>
</dbReference>
<dbReference type="HAMAP" id="MF_00381">
    <property type="entry name" value="IHF_beta"/>
    <property type="match status" value="1"/>
</dbReference>
<dbReference type="InterPro" id="IPR000119">
    <property type="entry name" value="Hist_DNA-bd"/>
</dbReference>
<dbReference type="InterPro" id="IPR020816">
    <property type="entry name" value="Histone-like_DNA-bd_CS"/>
</dbReference>
<dbReference type="InterPro" id="IPR010992">
    <property type="entry name" value="IHF-like_DNA-bd_dom_sf"/>
</dbReference>
<dbReference type="InterPro" id="IPR005685">
    <property type="entry name" value="IHF_beta"/>
</dbReference>
<dbReference type="NCBIfam" id="TIGR00988">
    <property type="entry name" value="hip"/>
    <property type="match status" value="1"/>
</dbReference>
<dbReference type="NCBIfam" id="NF001222">
    <property type="entry name" value="PRK00199.1"/>
    <property type="match status" value="1"/>
</dbReference>
<dbReference type="PANTHER" id="PTHR33175">
    <property type="entry name" value="DNA-BINDING PROTEIN HU"/>
    <property type="match status" value="1"/>
</dbReference>
<dbReference type="PANTHER" id="PTHR33175:SF5">
    <property type="entry name" value="INTEGRATION HOST FACTOR SUBUNIT BETA"/>
    <property type="match status" value="1"/>
</dbReference>
<dbReference type="Pfam" id="PF00216">
    <property type="entry name" value="Bac_DNA_binding"/>
    <property type="match status" value="1"/>
</dbReference>
<dbReference type="PRINTS" id="PR01727">
    <property type="entry name" value="DNABINDINGHU"/>
</dbReference>
<dbReference type="SMART" id="SM00411">
    <property type="entry name" value="BHL"/>
    <property type="match status" value="1"/>
</dbReference>
<dbReference type="SUPFAM" id="SSF47729">
    <property type="entry name" value="IHF-like DNA-binding proteins"/>
    <property type="match status" value="1"/>
</dbReference>
<dbReference type="PROSITE" id="PS00045">
    <property type="entry name" value="HISTONE_LIKE"/>
    <property type="match status" value="1"/>
</dbReference>
<keyword id="KW-0233">DNA recombination</keyword>
<keyword id="KW-0238">DNA-binding</keyword>
<keyword id="KW-0804">Transcription</keyword>
<keyword id="KW-0805">Transcription regulation</keyword>
<keyword id="KW-0810">Translation regulation</keyword>
<feature type="chain" id="PRO_1000060608" description="Integration host factor subunit beta">
    <location>
        <begin position="1"/>
        <end position="94"/>
    </location>
</feature>